<name>COBQ_BURCM</name>
<dbReference type="EMBL" id="CP000440">
    <property type="protein sequence ID" value="ABI88050.1"/>
    <property type="status" value="ALT_INIT"/>
    <property type="molecule type" value="Genomic_DNA"/>
</dbReference>
<dbReference type="RefSeq" id="WP_011657662.1">
    <property type="nucleotide sequence ID" value="NZ_CP009798.1"/>
</dbReference>
<dbReference type="SMR" id="Q0BCS3"/>
<dbReference type="KEGG" id="bam:Bamb_2494"/>
<dbReference type="PATRIC" id="fig|339670.21.peg.2417"/>
<dbReference type="eggNOG" id="COG1492">
    <property type="taxonomic scope" value="Bacteria"/>
</dbReference>
<dbReference type="UniPathway" id="UPA00148"/>
<dbReference type="Proteomes" id="UP000000662">
    <property type="component" value="Chromosome 1"/>
</dbReference>
<dbReference type="GO" id="GO:0015420">
    <property type="term" value="F:ABC-type vitamin B12 transporter activity"/>
    <property type="evidence" value="ECO:0007669"/>
    <property type="project" value="UniProtKB-UniRule"/>
</dbReference>
<dbReference type="GO" id="GO:0003824">
    <property type="term" value="F:catalytic activity"/>
    <property type="evidence" value="ECO:0007669"/>
    <property type="project" value="InterPro"/>
</dbReference>
<dbReference type="GO" id="GO:0009236">
    <property type="term" value="P:cobalamin biosynthetic process"/>
    <property type="evidence" value="ECO:0007669"/>
    <property type="project" value="UniProtKB-UniRule"/>
</dbReference>
<dbReference type="CDD" id="cd05389">
    <property type="entry name" value="CobQ_N"/>
    <property type="match status" value="1"/>
</dbReference>
<dbReference type="CDD" id="cd01750">
    <property type="entry name" value="GATase1_CobQ"/>
    <property type="match status" value="1"/>
</dbReference>
<dbReference type="Gene3D" id="3.40.50.880">
    <property type="match status" value="1"/>
</dbReference>
<dbReference type="Gene3D" id="3.40.50.300">
    <property type="entry name" value="P-loop containing nucleotide triphosphate hydrolases"/>
    <property type="match status" value="1"/>
</dbReference>
<dbReference type="HAMAP" id="MF_00028">
    <property type="entry name" value="CobQ"/>
    <property type="match status" value="1"/>
</dbReference>
<dbReference type="InterPro" id="IPR029062">
    <property type="entry name" value="Class_I_gatase-like"/>
</dbReference>
<dbReference type="InterPro" id="IPR002586">
    <property type="entry name" value="CobQ/CobB/MinD/ParA_Nub-bd_dom"/>
</dbReference>
<dbReference type="InterPro" id="IPR033949">
    <property type="entry name" value="CobQ_GATase1"/>
</dbReference>
<dbReference type="InterPro" id="IPR047045">
    <property type="entry name" value="CobQ_N"/>
</dbReference>
<dbReference type="InterPro" id="IPR004459">
    <property type="entry name" value="CobQ_synth"/>
</dbReference>
<dbReference type="InterPro" id="IPR011698">
    <property type="entry name" value="GATase_3"/>
</dbReference>
<dbReference type="InterPro" id="IPR027417">
    <property type="entry name" value="P-loop_NTPase"/>
</dbReference>
<dbReference type="NCBIfam" id="TIGR00313">
    <property type="entry name" value="cobQ"/>
    <property type="match status" value="1"/>
</dbReference>
<dbReference type="NCBIfam" id="NF001989">
    <property type="entry name" value="PRK00784.1"/>
    <property type="match status" value="1"/>
</dbReference>
<dbReference type="PANTHER" id="PTHR21343:SF1">
    <property type="entry name" value="COBYRIC ACID SYNTHASE"/>
    <property type="match status" value="1"/>
</dbReference>
<dbReference type="PANTHER" id="PTHR21343">
    <property type="entry name" value="DETHIOBIOTIN SYNTHETASE"/>
    <property type="match status" value="1"/>
</dbReference>
<dbReference type="Pfam" id="PF01656">
    <property type="entry name" value="CbiA"/>
    <property type="match status" value="1"/>
</dbReference>
<dbReference type="Pfam" id="PF07685">
    <property type="entry name" value="GATase_3"/>
    <property type="match status" value="1"/>
</dbReference>
<dbReference type="SUPFAM" id="SSF52317">
    <property type="entry name" value="Class I glutamine amidotransferase-like"/>
    <property type="match status" value="1"/>
</dbReference>
<dbReference type="SUPFAM" id="SSF52540">
    <property type="entry name" value="P-loop containing nucleoside triphosphate hydrolases"/>
    <property type="match status" value="1"/>
</dbReference>
<dbReference type="PROSITE" id="PS51274">
    <property type="entry name" value="GATASE_COBBQ"/>
    <property type="match status" value="1"/>
</dbReference>
<comment type="function">
    <text evidence="1">Catalyzes amidations at positions B, D, E, and G on adenosylcobyrinic A,C-diamide. NH(2) groups are provided by glutamine, and one molecule of ATP is hydrogenolyzed for each amidation.</text>
</comment>
<comment type="pathway">
    <text evidence="1">Cofactor biosynthesis; adenosylcobalamin biosynthesis.</text>
</comment>
<comment type="similarity">
    <text evidence="1">Belongs to the CobB/CobQ family. CobQ subfamily.</text>
</comment>
<comment type="sequence caution" evidence="2">
    <conflict type="erroneous initiation">
        <sequence resource="EMBL-CDS" id="ABI88050"/>
    </conflict>
</comment>
<protein>
    <recommendedName>
        <fullName evidence="1">Cobyric acid synthase</fullName>
    </recommendedName>
</protein>
<accession>Q0BCS3</accession>
<feature type="chain" id="PRO_0000332324" description="Cobyric acid synthase">
    <location>
        <begin position="1"/>
        <end position="488"/>
    </location>
</feature>
<feature type="domain" description="GATase cobBQ-type" evidence="1">
    <location>
        <begin position="248"/>
        <end position="441"/>
    </location>
</feature>
<feature type="active site" description="Nucleophile" evidence="1">
    <location>
        <position position="328"/>
    </location>
</feature>
<feature type="active site" evidence="1">
    <location>
        <position position="433"/>
    </location>
</feature>
<keyword id="KW-0169">Cobalamin biosynthesis</keyword>
<keyword id="KW-0315">Glutamine amidotransferase</keyword>
<sequence length="488" mass="51704">MIQGTTSDAGKSTLVAGLCRLARRAGARVAPFKPQNMALNSAVTADGGEIGRAQALQALAAGVAPHTDFNPVLLKPTSDRGAQVIIHGKARMNLDARAYHDYKPVAFDAVLESYARLRAGYDTVLVEGAGSPAEINLREGDIANMGFAERVDCPVVLVADIDRGGVFAHLVGTLACLSDSERARVRGFVINRFRGDIKLLEPGLDWLRAQTGKPVFGVLPYLHGLLLDAEDMLPSQARSAAARGDAGVLRVVVPALPRISNHTDFDPLRAHPQVEFTYWKSGPVPDADLLILPGSKSVQRDLAWLRDAGWDAVIRRHLRYGGKVIGICGGMQMLGRTLDDPLGLEGAPASVPGLGLLDFDTTLQPDKTLKNVTGHLALPGAAAVHGYEIHMGDTRGPALAAPALTLAAGDASGGVRPDGAVSADGQILATYVHGLFDAPDACAVLLAWAGLDGAERIDYPALREASLERLADSFAEHLDLRALYAEFR</sequence>
<reference key="1">
    <citation type="submission" date="2006-08" db="EMBL/GenBank/DDBJ databases">
        <title>Complete sequence of chromosome 1 of Burkholderia cepacia AMMD.</title>
        <authorList>
            <person name="Copeland A."/>
            <person name="Lucas S."/>
            <person name="Lapidus A."/>
            <person name="Barry K."/>
            <person name="Detter J.C."/>
            <person name="Glavina del Rio T."/>
            <person name="Hammon N."/>
            <person name="Israni S."/>
            <person name="Pitluck S."/>
            <person name="Bruce D."/>
            <person name="Chain P."/>
            <person name="Malfatti S."/>
            <person name="Shin M."/>
            <person name="Vergez L."/>
            <person name="Schmutz J."/>
            <person name="Larimer F."/>
            <person name="Land M."/>
            <person name="Hauser L."/>
            <person name="Kyrpides N."/>
            <person name="Kim E."/>
            <person name="Parke J."/>
            <person name="Coenye T."/>
            <person name="Konstantinidis K."/>
            <person name="Ramette A."/>
            <person name="Tiedje J."/>
            <person name="Richardson P."/>
        </authorList>
    </citation>
    <scope>NUCLEOTIDE SEQUENCE [LARGE SCALE GENOMIC DNA]</scope>
    <source>
        <strain>ATCC BAA-244 / DSM 16087 / CCUG 44356 / LMG 19182 / AMMD</strain>
    </source>
</reference>
<organism>
    <name type="scientific">Burkholderia ambifaria (strain ATCC BAA-244 / DSM 16087 / CCUG 44356 / LMG 19182 / AMMD)</name>
    <name type="common">Burkholderia cepacia (strain AMMD)</name>
    <dbReference type="NCBI Taxonomy" id="339670"/>
    <lineage>
        <taxon>Bacteria</taxon>
        <taxon>Pseudomonadati</taxon>
        <taxon>Pseudomonadota</taxon>
        <taxon>Betaproteobacteria</taxon>
        <taxon>Burkholderiales</taxon>
        <taxon>Burkholderiaceae</taxon>
        <taxon>Burkholderia</taxon>
        <taxon>Burkholderia cepacia complex</taxon>
    </lineage>
</organism>
<proteinExistence type="inferred from homology"/>
<evidence type="ECO:0000255" key="1">
    <source>
        <dbReference type="HAMAP-Rule" id="MF_00028"/>
    </source>
</evidence>
<evidence type="ECO:0000305" key="2"/>
<gene>
    <name evidence="1" type="primary">cobQ</name>
    <name type="ordered locus">Bamb_2494</name>
</gene>